<protein>
    <recommendedName>
        <fullName>Tetracenomycin C resistance and export protein</fullName>
    </recommendedName>
</protein>
<proteinExistence type="inferred from homology"/>
<evidence type="ECO:0000255" key="1"/>
<evidence type="ECO:0000305" key="2"/>
<comment type="function">
    <text>Resistance to tetracenomycin C by an active tetracenomycin C efflux system which is probably energized by transmembrane electrochemical gradients.</text>
</comment>
<comment type="pathway">
    <text>Antibiotic biosynthesis; tetracenomycin C biosynthesis.</text>
</comment>
<comment type="subcellular location">
    <subcellularLocation>
        <location>Cell membrane</location>
        <topology>Multi-pass membrane protein</topology>
    </subcellularLocation>
</comment>
<comment type="similarity">
    <text evidence="2">Belongs to the major facilitator superfamily. EmrB family.</text>
</comment>
<sequence length="538" mass="54846">MSTETHDEPSGVAHTPASGLRGRPWPTLLAVAVGVMMVALDSTIVAIANPAIQQDLHASLADVQWITNGYLLALAVSLITAGKLGDRFGHRQTFLVGVAGFAVTSAAIGLSGSVAAIVVFRVLQGLFGALMQPSALGLLRVTFPPGKLNMAIGIWSGVVGASTAAGPIIGGLLVQHVGWEAVFFINVPVGLAALVAGLVILTDARAERAPKSFDVSGIVLLSGAMFCLVWGLIKAPAWGWGDLRTLGFLAAAVLAFAGFTLRESRATEPLMPLAMFRSVPLSAGTVLMVLMAFSFIGGLFFVTFYLQNVHGMSPVESGVHLLPLTGMMIVGAPVSGIVISRFGPGGPLVVGMLLTAASLWGMSTLEADSGMGITSLWFVLLGLGLAPVMVGTTDVIVSNAPAELAGVAGGLQQSAMQVGGSLGTAVLGVLMASRVGDVFPDKWAEANLPRVGPREAAAIEDAAEVGAVPPAGTLPGRHAGTLSEVVHSSFISGMGLAFTVAGAVALVAAAVALFTRKAEPDERAPEEFPVPASTAGRG</sequence>
<keyword id="KW-0045">Antibiotic biosynthesis</keyword>
<keyword id="KW-0046">Antibiotic resistance</keyword>
<keyword id="KW-1003">Cell membrane</keyword>
<keyword id="KW-0472">Membrane</keyword>
<keyword id="KW-0812">Transmembrane</keyword>
<keyword id="KW-1133">Transmembrane helix</keyword>
<keyword id="KW-0813">Transport</keyword>
<gene>
    <name type="primary">tcmA</name>
</gene>
<feature type="chain" id="PRO_0000173366" description="Tetracenomycin C resistance and export protein">
    <location>
        <begin position="1"/>
        <end position="538"/>
    </location>
</feature>
<feature type="transmembrane region" description="Helical" evidence="1">
    <location>
        <begin position="28"/>
        <end position="48"/>
    </location>
</feature>
<feature type="transmembrane region" description="Helical" evidence="1">
    <location>
        <begin position="65"/>
        <end position="85"/>
    </location>
</feature>
<feature type="transmembrane region" description="Helical" evidence="1">
    <location>
        <begin position="100"/>
        <end position="120"/>
    </location>
</feature>
<feature type="transmembrane region" description="Helical" evidence="1">
    <location>
        <begin position="126"/>
        <end position="146"/>
    </location>
</feature>
<feature type="transmembrane region" description="Helical" evidence="1">
    <location>
        <begin position="154"/>
        <end position="174"/>
    </location>
</feature>
<feature type="transmembrane region" description="Helical" evidence="1">
    <location>
        <begin position="181"/>
        <end position="201"/>
    </location>
</feature>
<feature type="transmembrane region" description="Helical" evidence="1">
    <location>
        <begin position="213"/>
        <end position="233"/>
    </location>
</feature>
<feature type="transmembrane region" description="Helical" evidence="1">
    <location>
        <begin position="239"/>
        <end position="259"/>
    </location>
</feature>
<feature type="transmembrane region" description="Helical" evidence="1">
    <location>
        <begin position="286"/>
        <end position="306"/>
    </location>
</feature>
<feature type="transmembrane region" description="Helical" evidence="1">
    <location>
        <begin position="319"/>
        <end position="339"/>
    </location>
</feature>
<feature type="transmembrane region" description="Helical" evidence="1">
    <location>
        <begin position="342"/>
        <end position="362"/>
    </location>
</feature>
<feature type="transmembrane region" description="Helical" evidence="1">
    <location>
        <begin position="371"/>
        <end position="391"/>
    </location>
</feature>
<feature type="transmembrane region" description="Helical" evidence="1">
    <location>
        <begin position="413"/>
        <end position="433"/>
    </location>
</feature>
<feature type="transmembrane region" description="Helical" evidence="1">
    <location>
        <begin position="494"/>
        <end position="514"/>
    </location>
</feature>
<accession>P39886</accession>
<reference key="1">
    <citation type="journal article" date="1992" name="J. Bacteriol.">
        <title>Sequence and transcriptional analysis of the Streptomyces glaucescens tcmAR tetracenomycin C resistance and repressor gene loci.</title>
        <authorList>
            <person name="Guilfoile P.G."/>
            <person name="Hutchinson C.R."/>
        </authorList>
    </citation>
    <scope>NUCLEOTIDE SEQUENCE [GENOMIC DNA]</scope>
    <source>
        <strain>DSM 40716 / ETH 22794 / Tue 49</strain>
    </source>
</reference>
<dbReference type="EMBL" id="M80674">
    <property type="protein sequence ID" value="AAA67509.1"/>
    <property type="molecule type" value="Genomic_DNA"/>
</dbReference>
<dbReference type="PIR" id="A41901">
    <property type="entry name" value="A41901"/>
</dbReference>
<dbReference type="RefSeq" id="WP_052413892.1">
    <property type="nucleotide sequence ID" value="NG_048121.1"/>
</dbReference>
<dbReference type="SMR" id="P39886"/>
<dbReference type="STRING" id="1907.SGLAU_26325"/>
<dbReference type="TCDB" id="2.A.1.3.12">
    <property type="family name" value="the major facilitator superfamily (mfs)"/>
</dbReference>
<dbReference type="eggNOG" id="COG0477">
    <property type="taxonomic scope" value="Bacteria"/>
</dbReference>
<dbReference type="OrthoDB" id="7375466at2"/>
<dbReference type="UniPathway" id="UPA00174"/>
<dbReference type="GO" id="GO:0005886">
    <property type="term" value="C:plasma membrane"/>
    <property type="evidence" value="ECO:0007669"/>
    <property type="project" value="UniProtKB-SubCell"/>
</dbReference>
<dbReference type="GO" id="GO:0022857">
    <property type="term" value="F:transmembrane transporter activity"/>
    <property type="evidence" value="ECO:0007669"/>
    <property type="project" value="InterPro"/>
</dbReference>
<dbReference type="GO" id="GO:0017000">
    <property type="term" value="P:antibiotic biosynthetic process"/>
    <property type="evidence" value="ECO:0007669"/>
    <property type="project" value="UniProtKB-KW"/>
</dbReference>
<dbReference type="GO" id="GO:0046677">
    <property type="term" value="P:response to antibiotic"/>
    <property type="evidence" value="ECO:0007669"/>
    <property type="project" value="UniProtKB-KW"/>
</dbReference>
<dbReference type="CDD" id="cd17321">
    <property type="entry name" value="MFS_MMR_MDR_like"/>
    <property type="match status" value="1"/>
</dbReference>
<dbReference type="Gene3D" id="1.20.1250.20">
    <property type="entry name" value="MFS general substrate transporter like domains"/>
    <property type="match status" value="1"/>
</dbReference>
<dbReference type="Gene3D" id="1.20.1720.10">
    <property type="entry name" value="Multidrug resistance protein D"/>
    <property type="match status" value="1"/>
</dbReference>
<dbReference type="InterPro" id="IPR004638">
    <property type="entry name" value="EmrB-like"/>
</dbReference>
<dbReference type="InterPro" id="IPR011701">
    <property type="entry name" value="MFS"/>
</dbReference>
<dbReference type="InterPro" id="IPR020846">
    <property type="entry name" value="MFS_dom"/>
</dbReference>
<dbReference type="InterPro" id="IPR036259">
    <property type="entry name" value="MFS_trans_sf"/>
</dbReference>
<dbReference type="NCBIfam" id="TIGR00711">
    <property type="entry name" value="efflux_EmrB"/>
    <property type="match status" value="1"/>
</dbReference>
<dbReference type="NCBIfam" id="NF000025">
    <property type="entry name" value="MFS_efflux_tcmA"/>
    <property type="match status" value="1"/>
</dbReference>
<dbReference type="PANTHER" id="PTHR42718:SF42">
    <property type="entry name" value="EXPORT PROTEIN"/>
    <property type="match status" value="1"/>
</dbReference>
<dbReference type="PANTHER" id="PTHR42718">
    <property type="entry name" value="MAJOR FACILITATOR SUPERFAMILY MULTIDRUG TRANSPORTER MFSC"/>
    <property type="match status" value="1"/>
</dbReference>
<dbReference type="Pfam" id="PF07690">
    <property type="entry name" value="MFS_1"/>
    <property type="match status" value="1"/>
</dbReference>
<dbReference type="SUPFAM" id="SSF103473">
    <property type="entry name" value="MFS general substrate transporter"/>
    <property type="match status" value="1"/>
</dbReference>
<dbReference type="PROSITE" id="PS50850">
    <property type="entry name" value="MFS"/>
    <property type="match status" value="1"/>
</dbReference>
<organism>
    <name type="scientific">Streptomyces glaucescens</name>
    <dbReference type="NCBI Taxonomy" id="1907"/>
    <lineage>
        <taxon>Bacteria</taxon>
        <taxon>Bacillati</taxon>
        <taxon>Actinomycetota</taxon>
        <taxon>Actinomycetes</taxon>
        <taxon>Kitasatosporales</taxon>
        <taxon>Streptomycetaceae</taxon>
        <taxon>Streptomyces</taxon>
    </lineage>
</organism>
<name>TCMA_STRGA</name>